<feature type="chain" id="PRO_1000212084" description="Nicotinate phosphoribosyltransferase">
    <location>
        <begin position="1"/>
        <end position="401"/>
    </location>
</feature>
<feature type="modified residue" description="Phosphohistidine; by autocatalysis" evidence="1">
    <location>
        <position position="221"/>
    </location>
</feature>
<dbReference type="EC" id="6.3.4.21" evidence="1"/>
<dbReference type="EMBL" id="CP001600">
    <property type="protein sequence ID" value="ACR68551.1"/>
    <property type="molecule type" value="Genomic_DNA"/>
</dbReference>
<dbReference type="RefSeq" id="WP_015870716.1">
    <property type="nucleotide sequence ID" value="NZ_CP169062.1"/>
</dbReference>
<dbReference type="SMR" id="C5BD56"/>
<dbReference type="STRING" id="67780.B6E78_00165"/>
<dbReference type="GeneID" id="69538373"/>
<dbReference type="KEGG" id="eic:NT01EI_1361"/>
<dbReference type="PATRIC" id="fig|634503.3.peg.1224"/>
<dbReference type="HOGENOM" id="CLU_030991_1_0_6"/>
<dbReference type="OrthoDB" id="9771406at2"/>
<dbReference type="UniPathway" id="UPA00253">
    <property type="reaction ID" value="UER00457"/>
</dbReference>
<dbReference type="Proteomes" id="UP000001485">
    <property type="component" value="Chromosome"/>
</dbReference>
<dbReference type="GO" id="GO:0005829">
    <property type="term" value="C:cytosol"/>
    <property type="evidence" value="ECO:0007669"/>
    <property type="project" value="TreeGrafter"/>
</dbReference>
<dbReference type="GO" id="GO:0004516">
    <property type="term" value="F:nicotinate phosphoribosyltransferase activity"/>
    <property type="evidence" value="ECO:0007669"/>
    <property type="project" value="UniProtKB-UniRule"/>
</dbReference>
<dbReference type="GO" id="GO:0034355">
    <property type="term" value="P:NAD biosynthetic process via the salvage pathway"/>
    <property type="evidence" value="ECO:0007669"/>
    <property type="project" value="TreeGrafter"/>
</dbReference>
<dbReference type="CDD" id="cd01401">
    <property type="entry name" value="PncB_like"/>
    <property type="match status" value="1"/>
</dbReference>
<dbReference type="FunFam" id="3.20.140.10:FF:000001">
    <property type="entry name" value="Nicotinate phosphoribosyltransferase"/>
    <property type="match status" value="1"/>
</dbReference>
<dbReference type="Gene3D" id="3.20.140.10">
    <property type="entry name" value="nicotinate phosphoribosyltransferase"/>
    <property type="match status" value="1"/>
</dbReference>
<dbReference type="HAMAP" id="MF_00570">
    <property type="entry name" value="NAPRTase"/>
    <property type="match status" value="1"/>
</dbReference>
<dbReference type="InterPro" id="IPR041525">
    <property type="entry name" value="N/Namide_PRibTrfase"/>
</dbReference>
<dbReference type="InterPro" id="IPR040727">
    <property type="entry name" value="NAPRTase_N"/>
</dbReference>
<dbReference type="InterPro" id="IPR006406">
    <property type="entry name" value="Nic_PRibTrfase"/>
</dbReference>
<dbReference type="InterPro" id="IPR007229">
    <property type="entry name" value="Nic_PRibTrfase-Fam"/>
</dbReference>
<dbReference type="InterPro" id="IPR036068">
    <property type="entry name" value="Nicotinate_pribotase-like_C"/>
</dbReference>
<dbReference type="NCBIfam" id="TIGR01514">
    <property type="entry name" value="NAPRTase"/>
    <property type="match status" value="1"/>
</dbReference>
<dbReference type="NCBIfam" id="NF003704">
    <property type="entry name" value="PRK05321.1"/>
    <property type="match status" value="1"/>
</dbReference>
<dbReference type="PANTHER" id="PTHR11098">
    <property type="entry name" value="NICOTINATE PHOSPHORIBOSYLTRANSFERASE"/>
    <property type="match status" value="1"/>
</dbReference>
<dbReference type="PANTHER" id="PTHR11098:SF1">
    <property type="entry name" value="NICOTINATE PHOSPHORIBOSYLTRANSFERASE"/>
    <property type="match status" value="1"/>
</dbReference>
<dbReference type="Pfam" id="PF04095">
    <property type="entry name" value="NAPRTase"/>
    <property type="match status" value="1"/>
</dbReference>
<dbReference type="Pfam" id="PF17767">
    <property type="entry name" value="NAPRTase_N"/>
    <property type="match status" value="1"/>
</dbReference>
<dbReference type="PIRSF" id="PIRSF000484">
    <property type="entry name" value="NAPRT"/>
    <property type="match status" value="1"/>
</dbReference>
<dbReference type="SUPFAM" id="SSF51690">
    <property type="entry name" value="Nicotinate/Quinolinate PRTase C-terminal domain-like"/>
    <property type="match status" value="1"/>
</dbReference>
<dbReference type="SUPFAM" id="SSF54675">
    <property type="entry name" value="Nicotinate/Quinolinate PRTase N-terminal domain-like"/>
    <property type="match status" value="1"/>
</dbReference>
<proteinExistence type="inferred from homology"/>
<gene>
    <name evidence="1" type="primary">pncB</name>
    <name type="ordered locus">NT01EI_1361</name>
</gene>
<reference key="1">
    <citation type="submission" date="2009-03" db="EMBL/GenBank/DDBJ databases">
        <title>Complete genome sequence of Edwardsiella ictaluri 93-146.</title>
        <authorList>
            <person name="Williams M.L."/>
            <person name="Gillaspy A.F."/>
            <person name="Dyer D.W."/>
            <person name="Thune R.L."/>
            <person name="Waldbieser G.C."/>
            <person name="Schuster S.C."/>
            <person name="Gipson J."/>
            <person name="Zaitshik J."/>
            <person name="Landry C."/>
            <person name="Lawrence M.L."/>
        </authorList>
    </citation>
    <scope>NUCLEOTIDE SEQUENCE [LARGE SCALE GENOMIC DNA]</scope>
    <source>
        <strain>93-146</strain>
    </source>
</reference>
<evidence type="ECO:0000255" key="1">
    <source>
        <dbReference type="HAMAP-Rule" id="MF_00570"/>
    </source>
</evidence>
<organism>
    <name type="scientific">Edwardsiella ictaluri (strain 93-146)</name>
    <dbReference type="NCBI Taxonomy" id="634503"/>
    <lineage>
        <taxon>Bacteria</taxon>
        <taxon>Pseudomonadati</taxon>
        <taxon>Pseudomonadota</taxon>
        <taxon>Gammaproteobacteria</taxon>
        <taxon>Enterobacterales</taxon>
        <taxon>Hafniaceae</taxon>
        <taxon>Edwardsiella</taxon>
    </lineage>
</organism>
<keyword id="KW-0436">Ligase</keyword>
<keyword id="KW-0597">Phosphoprotein</keyword>
<keyword id="KW-0662">Pyridine nucleotide biosynthesis</keyword>
<name>PNCB_EDWI9</name>
<sequence length="401" mass="45538">MTQDVSPIITSLLDTDAYKLHMQQAVYHRYRNVSVAAEFRCRGDELLGEYAGEIANQVNLMGQLALTQDEYDYLAALPFFQRDYLDWLRTLRLDPRRVAISNDRGRLNIRISGPWREVILWEVPLLAVISEVVHRHRSPHITPEVAAAQLQRRLSEFRHLSADVDLRGFHLIDFGTRRRFSRAVHQAILTTLKSEFPYLSGTSNYLFAKQMALTPLGTQAHEWFQAHQQICPVLANSQRAALQSWLDEYPDQLGIALTDCITMDAFLRDFGSQFAGHYQGLRHDSGDPIAWGEKAIAHYEQLGLDPQDKMLVFSDNLDLPKALALYRHFHHRINLSFGIGTRLTCDLPGVRPLNIVIKLVECNGKPVAKLSDSPGKTICQDAAFVKALRKAFDLPLVKRAS</sequence>
<accession>C5BD56</accession>
<comment type="function">
    <text evidence="1">Catalyzes the synthesis of beta-nicotinate D-ribonucleotide from nicotinate and 5-phospho-D-ribose 1-phosphate at the expense of ATP.</text>
</comment>
<comment type="catalytic activity">
    <reaction evidence="1">
        <text>nicotinate + 5-phospho-alpha-D-ribose 1-diphosphate + ATP + H2O = nicotinate beta-D-ribonucleotide + ADP + phosphate + diphosphate</text>
        <dbReference type="Rhea" id="RHEA:36163"/>
        <dbReference type="ChEBI" id="CHEBI:15377"/>
        <dbReference type="ChEBI" id="CHEBI:30616"/>
        <dbReference type="ChEBI" id="CHEBI:32544"/>
        <dbReference type="ChEBI" id="CHEBI:33019"/>
        <dbReference type="ChEBI" id="CHEBI:43474"/>
        <dbReference type="ChEBI" id="CHEBI:57502"/>
        <dbReference type="ChEBI" id="CHEBI:58017"/>
        <dbReference type="ChEBI" id="CHEBI:456216"/>
        <dbReference type="EC" id="6.3.4.21"/>
    </reaction>
</comment>
<comment type="pathway">
    <text evidence="1">Cofactor biosynthesis; NAD(+) biosynthesis; nicotinate D-ribonucleotide from nicotinate: step 1/1.</text>
</comment>
<comment type="PTM">
    <text evidence="1">Transiently phosphorylated on a His residue during the reaction cycle. Phosphorylation strongly increases the affinity for substrates and increases the rate of nicotinate D-ribonucleotide production. Dephosphorylation regenerates the low-affinity form of the enzyme, leading to product release.</text>
</comment>
<comment type="similarity">
    <text evidence="1">Belongs to the NAPRTase family.</text>
</comment>
<protein>
    <recommendedName>
        <fullName evidence="1">Nicotinate phosphoribosyltransferase</fullName>
        <shortName evidence="1">NAPRTase</shortName>
        <ecNumber evidence="1">6.3.4.21</ecNumber>
    </recommendedName>
</protein>